<proteinExistence type="inferred from homology"/>
<gene>
    <name evidence="1" type="primary">rplP</name>
    <name type="ordered locus">Bphyt_3637</name>
</gene>
<reference key="1">
    <citation type="journal article" date="2011" name="J. Bacteriol.">
        <title>Complete genome sequence of the plant growth-promoting endophyte Burkholderia phytofirmans strain PsJN.</title>
        <authorList>
            <person name="Weilharter A."/>
            <person name="Mitter B."/>
            <person name="Shin M.V."/>
            <person name="Chain P.S."/>
            <person name="Nowak J."/>
            <person name="Sessitsch A."/>
        </authorList>
    </citation>
    <scope>NUCLEOTIDE SEQUENCE [LARGE SCALE GENOMIC DNA]</scope>
    <source>
        <strain>DSM 17436 / LMG 22146 / PsJN</strain>
    </source>
</reference>
<evidence type="ECO:0000255" key="1">
    <source>
        <dbReference type="HAMAP-Rule" id="MF_01342"/>
    </source>
</evidence>
<evidence type="ECO:0000256" key="2">
    <source>
        <dbReference type="SAM" id="MobiDB-lite"/>
    </source>
</evidence>
<evidence type="ECO:0000305" key="3"/>
<feature type="chain" id="PRO_1000142940" description="Large ribosomal subunit protein uL16">
    <location>
        <begin position="1"/>
        <end position="138"/>
    </location>
</feature>
<feature type="region of interest" description="Disordered" evidence="2">
    <location>
        <begin position="1"/>
        <end position="20"/>
    </location>
</feature>
<feature type="compositionally biased region" description="Basic residues" evidence="2">
    <location>
        <begin position="1"/>
        <end position="13"/>
    </location>
</feature>
<sequence length="138" mass="15620">MLQPKRRKYRKEQKGRNTGIATRGNAVSFGEFGLKAIGRGRLTARQIEAARRAMTRHIKRGGRIWIRIFPDKPISHKPAEVRMGNGKGNPEYYVAEIQPGKMLYEMDGVTEELAREAFRLAAAKLPLKTTFIVRQLGA</sequence>
<keyword id="KW-0687">Ribonucleoprotein</keyword>
<keyword id="KW-0689">Ribosomal protein</keyword>
<keyword id="KW-0694">RNA-binding</keyword>
<keyword id="KW-0699">rRNA-binding</keyword>
<keyword id="KW-0820">tRNA-binding</keyword>
<name>RL16_PARPJ</name>
<dbReference type="EMBL" id="CP001052">
    <property type="protein sequence ID" value="ACD18027.1"/>
    <property type="molecule type" value="Genomic_DNA"/>
</dbReference>
<dbReference type="RefSeq" id="WP_007180131.1">
    <property type="nucleotide sequence ID" value="NC_010681.1"/>
</dbReference>
<dbReference type="SMR" id="B2T744"/>
<dbReference type="STRING" id="398527.Bphyt_3637"/>
<dbReference type="GeneID" id="97310999"/>
<dbReference type="KEGG" id="bpy:Bphyt_3637"/>
<dbReference type="eggNOG" id="COG0197">
    <property type="taxonomic scope" value="Bacteria"/>
</dbReference>
<dbReference type="HOGENOM" id="CLU_078858_2_1_4"/>
<dbReference type="OrthoDB" id="9802589at2"/>
<dbReference type="Proteomes" id="UP000001739">
    <property type="component" value="Chromosome 1"/>
</dbReference>
<dbReference type="GO" id="GO:0022625">
    <property type="term" value="C:cytosolic large ribosomal subunit"/>
    <property type="evidence" value="ECO:0007669"/>
    <property type="project" value="TreeGrafter"/>
</dbReference>
<dbReference type="GO" id="GO:0019843">
    <property type="term" value="F:rRNA binding"/>
    <property type="evidence" value="ECO:0007669"/>
    <property type="project" value="UniProtKB-UniRule"/>
</dbReference>
<dbReference type="GO" id="GO:0003735">
    <property type="term" value="F:structural constituent of ribosome"/>
    <property type="evidence" value="ECO:0007669"/>
    <property type="project" value="InterPro"/>
</dbReference>
<dbReference type="GO" id="GO:0000049">
    <property type="term" value="F:tRNA binding"/>
    <property type="evidence" value="ECO:0007669"/>
    <property type="project" value="UniProtKB-KW"/>
</dbReference>
<dbReference type="GO" id="GO:0006412">
    <property type="term" value="P:translation"/>
    <property type="evidence" value="ECO:0007669"/>
    <property type="project" value="UniProtKB-UniRule"/>
</dbReference>
<dbReference type="CDD" id="cd01433">
    <property type="entry name" value="Ribosomal_L16_L10e"/>
    <property type="match status" value="1"/>
</dbReference>
<dbReference type="FunFam" id="3.90.1170.10:FF:000001">
    <property type="entry name" value="50S ribosomal protein L16"/>
    <property type="match status" value="1"/>
</dbReference>
<dbReference type="Gene3D" id="3.90.1170.10">
    <property type="entry name" value="Ribosomal protein L10e/L16"/>
    <property type="match status" value="1"/>
</dbReference>
<dbReference type="HAMAP" id="MF_01342">
    <property type="entry name" value="Ribosomal_uL16"/>
    <property type="match status" value="1"/>
</dbReference>
<dbReference type="InterPro" id="IPR047873">
    <property type="entry name" value="Ribosomal_uL16"/>
</dbReference>
<dbReference type="InterPro" id="IPR000114">
    <property type="entry name" value="Ribosomal_uL16_bact-type"/>
</dbReference>
<dbReference type="InterPro" id="IPR020798">
    <property type="entry name" value="Ribosomal_uL16_CS"/>
</dbReference>
<dbReference type="InterPro" id="IPR016180">
    <property type="entry name" value="Ribosomal_uL16_dom"/>
</dbReference>
<dbReference type="InterPro" id="IPR036920">
    <property type="entry name" value="Ribosomal_uL16_sf"/>
</dbReference>
<dbReference type="NCBIfam" id="TIGR01164">
    <property type="entry name" value="rplP_bact"/>
    <property type="match status" value="1"/>
</dbReference>
<dbReference type="PANTHER" id="PTHR12220">
    <property type="entry name" value="50S/60S RIBOSOMAL PROTEIN L16"/>
    <property type="match status" value="1"/>
</dbReference>
<dbReference type="PANTHER" id="PTHR12220:SF13">
    <property type="entry name" value="LARGE RIBOSOMAL SUBUNIT PROTEIN UL16M"/>
    <property type="match status" value="1"/>
</dbReference>
<dbReference type="Pfam" id="PF00252">
    <property type="entry name" value="Ribosomal_L16"/>
    <property type="match status" value="1"/>
</dbReference>
<dbReference type="PRINTS" id="PR00060">
    <property type="entry name" value="RIBOSOMALL16"/>
</dbReference>
<dbReference type="SUPFAM" id="SSF54686">
    <property type="entry name" value="Ribosomal protein L16p/L10e"/>
    <property type="match status" value="1"/>
</dbReference>
<dbReference type="PROSITE" id="PS00586">
    <property type="entry name" value="RIBOSOMAL_L16_1"/>
    <property type="match status" value="1"/>
</dbReference>
<protein>
    <recommendedName>
        <fullName evidence="1">Large ribosomal subunit protein uL16</fullName>
    </recommendedName>
    <alternativeName>
        <fullName evidence="3">50S ribosomal protein L16</fullName>
    </alternativeName>
</protein>
<comment type="function">
    <text evidence="1">Binds 23S rRNA and is also seen to make contacts with the A and possibly P site tRNAs.</text>
</comment>
<comment type="subunit">
    <text evidence="1">Part of the 50S ribosomal subunit.</text>
</comment>
<comment type="similarity">
    <text evidence="1">Belongs to the universal ribosomal protein uL16 family.</text>
</comment>
<organism>
    <name type="scientific">Paraburkholderia phytofirmans (strain DSM 17436 / LMG 22146 / PsJN)</name>
    <name type="common">Burkholderia phytofirmans</name>
    <dbReference type="NCBI Taxonomy" id="398527"/>
    <lineage>
        <taxon>Bacteria</taxon>
        <taxon>Pseudomonadati</taxon>
        <taxon>Pseudomonadota</taxon>
        <taxon>Betaproteobacteria</taxon>
        <taxon>Burkholderiales</taxon>
        <taxon>Burkholderiaceae</taxon>
        <taxon>Paraburkholderia</taxon>
    </lineage>
</organism>
<accession>B2T744</accession>